<keyword id="KW-0093">Biotin biosynthesis</keyword>
<keyword id="KW-0663">Pyridoxal phosphate</keyword>
<keyword id="KW-0808">Transferase</keyword>
<protein>
    <recommendedName>
        <fullName evidence="1">8-amino-7-oxononanoate synthase</fullName>
        <shortName evidence="1">AONS</shortName>
        <ecNumber evidence="1">2.3.1.47</ecNumber>
    </recommendedName>
    <alternativeName>
        <fullName evidence="1">7-keto-8-amino-pelargonic acid synthase</fullName>
        <shortName evidence="1">7-KAP synthase</shortName>
        <shortName evidence="1">KAPA synthase</shortName>
    </alternativeName>
    <alternativeName>
        <fullName evidence="1">8-amino-7-ketopelargonate synthase</fullName>
    </alternativeName>
</protein>
<evidence type="ECO:0000255" key="1">
    <source>
        <dbReference type="HAMAP-Rule" id="MF_01693"/>
    </source>
</evidence>
<reference key="1">
    <citation type="submission" date="2007-06" db="EMBL/GenBank/DDBJ databases">
        <title>Complete sequence of Marinomonas sp. MWYL1.</title>
        <authorList>
            <consortium name="US DOE Joint Genome Institute"/>
            <person name="Copeland A."/>
            <person name="Lucas S."/>
            <person name="Lapidus A."/>
            <person name="Barry K."/>
            <person name="Glavina del Rio T."/>
            <person name="Dalin E."/>
            <person name="Tice H."/>
            <person name="Pitluck S."/>
            <person name="Kiss H."/>
            <person name="Brettin T."/>
            <person name="Bruce D."/>
            <person name="Detter J.C."/>
            <person name="Han C."/>
            <person name="Schmutz J."/>
            <person name="Larimer F."/>
            <person name="Land M."/>
            <person name="Hauser L."/>
            <person name="Kyrpides N."/>
            <person name="Kim E."/>
            <person name="Johnston A.W.B."/>
            <person name="Todd J.D."/>
            <person name="Rogers R."/>
            <person name="Wexler M."/>
            <person name="Bond P.L."/>
            <person name="Li Y."/>
            <person name="Richardson P."/>
        </authorList>
    </citation>
    <scope>NUCLEOTIDE SEQUENCE [LARGE SCALE GENOMIC DNA]</scope>
    <source>
        <strain>MWYL1</strain>
    </source>
</reference>
<proteinExistence type="inferred from homology"/>
<accession>A6W0Y0</accession>
<sequence>MKLASNTPDWVLAALEERRQQDLMRRTITLDSPQIPHTQIHSQDYTAFCSNDYLGLANHPKLIKALNDTAQAYGVGGGSSHLVCGHLAPHQALEEALADWLGYERVMLFSTGYMANLGVISALADKNRPIVQDKLNHASLIDGALLAQAPLRRYLHGDVASAQKLIARSAAGGLLITDGVFSMDGDIAPLTELSQLANQHDWMFMVDDAHGLGCLGENGRGCLALEGLDATSLPILVGTLGKAFGTAGAFVATSNDYADYLTQFARPYVYTTAMSPAIAGATLASLQLIQSAEGQERRDRLARHITYFRQRVQMLPVALMPSNTAIQPIVIGDSKAAIEISEQLKTLGIWCTAIRPPTVPAGSARLRITLSAAHSDEDLVLLCDSLEKVLTAKLLNAKRLNLK</sequence>
<gene>
    <name evidence="1" type="primary">bioF</name>
    <name type="ordered locus">Mmwyl1_3456</name>
</gene>
<organism>
    <name type="scientific">Marinomonas sp. (strain MWYL1)</name>
    <dbReference type="NCBI Taxonomy" id="400668"/>
    <lineage>
        <taxon>Bacteria</taxon>
        <taxon>Pseudomonadati</taxon>
        <taxon>Pseudomonadota</taxon>
        <taxon>Gammaproteobacteria</taxon>
        <taxon>Oceanospirillales</taxon>
        <taxon>Oceanospirillaceae</taxon>
        <taxon>Marinomonas</taxon>
    </lineage>
</organism>
<dbReference type="EC" id="2.3.1.47" evidence="1"/>
<dbReference type="EMBL" id="CP000749">
    <property type="protein sequence ID" value="ABR72359.1"/>
    <property type="molecule type" value="Genomic_DNA"/>
</dbReference>
<dbReference type="SMR" id="A6W0Y0"/>
<dbReference type="STRING" id="400668.Mmwyl1_3456"/>
<dbReference type="KEGG" id="mmw:Mmwyl1_3456"/>
<dbReference type="eggNOG" id="COG0156">
    <property type="taxonomic scope" value="Bacteria"/>
</dbReference>
<dbReference type="HOGENOM" id="CLU_015846_11_2_6"/>
<dbReference type="OrthoDB" id="9807157at2"/>
<dbReference type="UniPathway" id="UPA00078"/>
<dbReference type="GO" id="GO:0008710">
    <property type="term" value="F:8-amino-7-oxononanoate synthase activity"/>
    <property type="evidence" value="ECO:0007669"/>
    <property type="project" value="UniProtKB-UniRule"/>
</dbReference>
<dbReference type="GO" id="GO:0030170">
    <property type="term" value="F:pyridoxal phosphate binding"/>
    <property type="evidence" value="ECO:0007669"/>
    <property type="project" value="UniProtKB-UniRule"/>
</dbReference>
<dbReference type="GO" id="GO:0009102">
    <property type="term" value="P:biotin biosynthetic process"/>
    <property type="evidence" value="ECO:0007669"/>
    <property type="project" value="UniProtKB-UniRule"/>
</dbReference>
<dbReference type="CDD" id="cd06454">
    <property type="entry name" value="KBL_like"/>
    <property type="match status" value="1"/>
</dbReference>
<dbReference type="Gene3D" id="3.90.1150.10">
    <property type="entry name" value="Aspartate Aminotransferase, domain 1"/>
    <property type="match status" value="1"/>
</dbReference>
<dbReference type="Gene3D" id="3.40.640.10">
    <property type="entry name" value="Type I PLP-dependent aspartate aminotransferase-like (Major domain)"/>
    <property type="match status" value="1"/>
</dbReference>
<dbReference type="HAMAP" id="MF_01693">
    <property type="entry name" value="BioF_aminotrans_2"/>
    <property type="match status" value="1"/>
</dbReference>
<dbReference type="InterPro" id="IPR001917">
    <property type="entry name" value="Aminotrans_II_pyridoxalP_BS"/>
</dbReference>
<dbReference type="InterPro" id="IPR004839">
    <property type="entry name" value="Aminotransferase_I/II_large"/>
</dbReference>
<dbReference type="InterPro" id="IPR050087">
    <property type="entry name" value="AON_synthase_class-II"/>
</dbReference>
<dbReference type="InterPro" id="IPR004723">
    <property type="entry name" value="AONS_Archaea/Proteobacteria"/>
</dbReference>
<dbReference type="InterPro" id="IPR022834">
    <property type="entry name" value="AONS_Proteobacteria"/>
</dbReference>
<dbReference type="InterPro" id="IPR015424">
    <property type="entry name" value="PyrdxlP-dep_Trfase"/>
</dbReference>
<dbReference type="InterPro" id="IPR015421">
    <property type="entry name" value="PyrdxlP-dep_Trfase_major"/>
</dbReference>
<dbReference type="InterPro" id="IPR015422">
    <property type="entry name" value="PyrdxlP-dep_Trfase_small"/>
</dbReference>
<dbReference type="NCBIfam" id="TIGR00858">
    <property type="entry name" value="bioF"/>
    <property type="match status" value="1"/>
</dbReference>
<dbReference type="PANTHER" id="PTHR13693:SF100">
    <property type="entry name" value="8-AMINO-7-OXONONANOATE SYNTHASE"/>
    <property type="match status" value="1"/>
</dbReference>
<dbReference type="PANTHER" id="PTHR13693">
    <property type="entry name" value="CLASS II AMINOTRANSFERASE/8-AMINO-7-OXONONANOATE SYNTHASE"/>
    <property type="match status" value="1"/>
</dbReference>
<dbReference type="Pfam" id="PF00155">
    <property type="entry name" value="Aminotran_1_2"/>
    <property type="match status" value="1"/>
</dbReference>
<dbReference type="SUPFAM" id="SSF53383">
    <property type="entry name" value="PLP-dependent transferases"/>
    <property type="match status" value="1"/>
</dbReference>
<dbReference type="PROSITE" id="PS00599">
    <property type="entry name" value="AA_TRANSFER_CLASS_2"/>
    <property type="match status" value="1"/>
</dbReference>
<feature type="chain" id="PRO_0000381019" description="8-amino-7-oxononanoate synthase">
    <location>
        <begin position="1"/>
        <end position="403"/>
    </location>
</feature>
<feature type="binding site" evidence="1">
    <location>
        <position position="25"/>
    </location>
    <ligand>
        <name>substrate</name>
    </ligand>
</feature>
<feature type="binding site" evidence="1">
    <location>
        <begin position="112"/>
        <end position="113"/>
    </location>
    <ligand>
        <name>pyridoxal 5'-phosphate</name>
        <dbReference type="ChEBI" id="CHEBI:597326"/>
    </ligand>
</feature>
<feature type="binding site" evidence="1">
    <location>
        <position position="137"/>
    </location>
    <ligand>
        <name>substrate</name>
    </ligand>
</feature>
<feature type="binding site" evidence="1">
    <location>
        <position position="182"/>
    </location>
    <ligand>
        <name>pyridoxal 5'-phosphate</name>
        <dbReference type="ChEBI" id="CHEBI:597326"/>
    </ligand>
</feature>
<feature type="binding site" evidence="1">
    <location>
        <position position="210"/>
    </location>
    <ligand>
        <name>pyridoxal 5'-phosphate</name>
        <dbReference type="ChEBI" id="CHEBI:597326"/>
    </ligand>
</feature>
<feature type="binding site" evidence="1">
    <location>
        <position position="239"/>
    </location>
    <ligand>
        <name>pyridoxal 5'-phosphate</name>
        <dbReference type="ChEBI" id="CHEBI:597326"/>
    </ligand>
</feature>
<feature type="binding site" evidence="1">
    <location>
        <position position="358"/>
    </location>
    <ligand>
        <name>substrate</name>
    </ligand>
</feature>
<feature type="modified residue" description="N6-(pyridoxal phosphate)lysine" evidence="1">
    <location>
        <position position="242"/>
    </location>
</feature>
<comment type="function">
    <text evidence="1">Catalyzes the decarboxylative condensation of pimeloyl-[acyl-carrier protein] and L-alanine to produce 8-amino-7-oxononanoate (AON), [acyl-carrier protein], and carbon dioxide.</text>
</comment>
<comment type="catalytic activity">
    <reaction evidence="1">
        <text>6-carboxyhexanoyl-[ACP] + L-alanine + H(+) = (8S)-8-amino-7-oxononanoate + holo-[ACP] + CO2</text>
        <dbReference type="Rhea" id="RHEA:42288"/>
        <dbReference type="Rhea" id="RHEA-COMP:9685"/>
        <dbReference type="Rhea" id="RHEA-COMP:9955"/>
        <dbReference type="ChEBI" id="CHEBI:15378"/>
        <dbReference type="ChEBI" id="CHEBI:16526"/>
        <dbReference type="ChEBI" id="CHEBI:57972"/>
        <dbReference type="ChEBI" id="CHEBI:64479"/>
        <dbReference type="ChEBI" id="CHEBI:78846"/>
        <dbReference type="ChEBI" id="CHEBI:149468"/>
        <dbReference type="EC" id="2.3.1.47"/>
    </reaction>
</comment>
<comment type="cofactor">
    <cofactor evidence="1">
        <name>pyridoxal 5'-phosphate</name>
        <dbReference type="ChEBI" id="CHEBI:597326"/>
    </cofactor>
</comment>
<comment type="pathway">
    <text evidence="1">Cofactor biosynthesis; biotin biosynthesis.</text>
</comment>
<comment type="subunit">
    <text evidence="1">Homodimer.</text>
</comment>
<comment type="similarity">
    <text evidence="1">Belongs to the class-II pyridoxal-phosphate-dependent aminotransferase family. BioF subfamily.</text>
</comment>
<name>BIOF_MARMS</name>